<comment type="similarity">
    <text evidence="1">Belongs to the UPF0297 family.</text>
</comment>
<organism>
    <name type="scientific">Streptococcus pneumoniae (strain Taiwan19F-14)</name>
    <dbReference type="NCBI Taxonomy" id="487213"/>
    <lineage>
        <taxon>Bacteria</taxon>
        <taxon>Bacillati</taxon>
        <taxon>Bacillota</taxon>
        <taxon>Bacilli</taxon>
        <taxon>Lactobacillales</taxon>
        <taxon>Streptococcaceae</taxon>
        <taxon>Streptococcus</taxon>
    </lineage>
</organism>
<name>Y242_STRZT</name>
<reference key="1">
    <citation type="journal article" date="2010" name="Genome Biol.">
        <title>Structure and dynamics of the pan-genome of Streptococcus pneumoniae and closely related species.</title>
        <authorList>
            <person name="Donati C."/>
            <person name="Hiller N.L."/>
            <person name="Tettelin H."/>
            <person name="Muzzi A."/>
            <person name="Croucher N.J."/>
            <person name="Angiuoli S.V."/>
            <person name="Oggioni M."/>
            <person name="Dunning Hotopp J.C."/>
            <person name="Hu F.Z."/>
            <person name="Riley D.R."/>
            <person name="Covacci A."/>
            <person name="Mitchell T.J."/>
            <person name="Bentley S.D."/>
            <person name="Kilian M."/>
            <person name="Ehrlich G.D."/>
            <person name="Rappuoli R."/>
            <person name="Moxon E.R."/>
            <person name="Masignani V."/>
        </authorList>
    </citation>
    <scope>NUCLEOTIDE SEQUENCE [LARGE SCALE GENOMIC DNA]</scope>
    <source>
        <strain>Taiwan19F-14</strain>
    </source>
</reference>
<sequence length="88" mass="10227">MGFTEETVRFKLDDSNKKEISETLTDVYASLNDKGYNPINQIVGYVLSGDPAYVPRYNNARNQIRKYERDEIVEELVRYYLKGQGVDL</sequence>
<protein>
    <recommendedName>
        <fullName evidence="1">UPF0297 protein SPT_0242</fullName>
    </recommendedName>
</protein>
<evidence type="ECO:0000255" key="1">
    <source>
        <dbReference type="HAMAP-Rule" id="MF_01507"/>
    </source>
</evidence>
<accession>C1CP74</accession>
<feature type="chain" id="PRO_1000185051" description="UPF0297 protein SPT_0242">
    <location>
        <begin position="1"/>
        <end position="88"/>
    </location>
</feature>
<dbReference type="EMBL" id="CP000921">
    <property type="protein sequence ID" value="ACO23994.1"/>
    <property type="molecule type" value="Genomic_DNA"/>
</dbReference>
<dbReference type="RefSeq" id="WP_000507059.1">
    <property type="nucleotide sequence ID" value="NC_012469.1"/>
</dbReference>
<dbReference type="SMR" id="C1CP74"/>
<dbReference type="KEGG" id="snt:SPT_0242"/>
<dbReference type="HOGENOM" id="CLU_162466_0_0_9"/>
<dbReference type="HAMAP" id="MF_01507">
    <property type="entry name" value="UPF0297"/>
    <property type="match status" value="1"/>
</dbReference>
<dbReference type="InterPro" id="IPR009309">
    <property type="entry name" value="IreB"/>
</dbReference>
<dbReference type="NCBIfam" id="NF003997">
    <property type="entry name" value="PRK05473.1"/>
    <property type="match status" value="1"/>
</dbReference>
<dbReference type="PANTHER" id="PTHR40067">
    <property type="entry name" value="UPF0297 PROTEIN YRZL"/>
    <property type="match status" value="1"/>
</dbReference>
<dbReference type="PANTHER" id="PTHR40067:SF1">
    <property type="entry name" value="UPF0297 PROTEIN YRZL"/>
    <property type="match status" value="1"/>
</dbReference>
<dbReference type="Pfam" id="PF06135">
    <property type="entry name" value="IreB"/>
    <property type="match status" value="1"/>
</dbReference>
<dbReference type="PIRSF" id="PIRSF037258">
    <property type="entry name" value="DUF965_bac"/>
    <property type="match status" value="1"/>
</dbReference>
<gene>
    <name type="ordered locus">SPT_0242</name>
</gene>
<proteinExistence type="inferred from homology"/>